<sequence>MTSLSPLLEKFRAHLEDEKGSSPHTVRNYLIDLVDFERYLVERMKLSLLSGTHAAIRGYLGTLSTDHAPASRARRLASIKSFYKYLVRQKLLPASPAKLVKSPKLPKTLPKVLPVEEVFAILDMPDVKTVLGLRDRAILELLYGGGLRISELCGLDLLDIDRSGRIVRVMGKGSKERLVPVNAQSIRALEAYLARRGELLATIRKDQAPEAMFLNFRGGRLTPRSIARHLDTYVLKCALTRKVSPHAMRHSFATHLLGGGADIRSIQELLGHSSLSTTQRYTQVTWEQLQQVYDSAHPRA</sequence>
<evidence type="ECO:0000255" key="1">
    <source>
        <dbReference type="HAMAP-Rule" id="MF_01808"/>
    </source>
</evidence>
<evidence type="ECO:0000255" key="2">
    <source>
        <dbReference type="PROSITE-ProRule" id="PRU01246"/>
    </source>
</evidence>
<evidence type="ECO:0000255" key="3">
    <source>
        <dbReference type="PROSITE-ProRule" id="PRU01248"/>
    </source>
</evidence>
<keyword id="KW-0131">Cell cycle</keyword>
<keyword id="KW-0132">Cell division</keyword>
<keyword id="KW-0159">Chromosome partition</keyword>
<keyword id="KW-0963">Cytoplasm</keyword>
<keyword id="KW-0229">DNA integration</keyword>
<keyword id="KW-0233">DNA recombination</keyword>
<keyword id="KW-0238">DNA-binding</keyword>
<gene>
    <name evidence="1" type="primary">xerC</name>
</gene>
<organism>
    <name type="scientific">Myxococcus xanthus</name>
    <dbReference type="NCBI Taxonomy" id="34"/>
    <lineage>
        <taxon>Bacteria</taxon>
        <taxon>Pseudomonadati</taxon>
        <taxon>Myxococcota</taxon>
        <taxon>Myxococcia</taxon>
        <taxon>Myxococcales</taxon>
        <taxon>Cystobacterineae</taxon>
        <taxon>Myxococcaceae</taxon>
        <taxon>Myxococcus</taxon>
    </lineage>
</organism>
<accession>P59818</accession>
<dbReference type="EMBL" id="AY204472">
    <property type="protein sequence ID" value="AAO22922.1"/>
    <property type="molecule type" value="Genomic_DNA"/>
</dbReference>
<dbReference type="RefSeq" id="WP_011553066.1">
    <property type="nucleotide sequence ID" value="NZ_JABFNQ010000048.1"/>
</dbReference>
<dbReference type="SMR" id="P59818"/>
<dbReference type="OMA" id="AMMELMY"/>
<dbReference type="GO" id="GO:0005737">
    <property type="term" value="C:cytoplasm"/>
    <property type="evidence" value="ECO:0007669"/>
    <property type="project" value="UniProtKB-SubCell"/>
</dbReference>
<dbReference type="GO" id="GO:0003677">
    <property type="term" value="F:DNA binding"/>
    <property type="evidence" value="ECO:0007669"/>
    <property type="project" value="UniProtKB-KW"/>
</dbReference>
<dbReference type="GO" id="GO:0009037">
    <property type="term" value="F:tyrosine-based site-specific recombinase activity"/>
    <property type="evidence" value="ECO:0007669"/>
    <property type="project" value="UniProtKB-UniRule"/>
</dbReference>
<dbReference type="GO" id="GO:0051301">
    <property type="term" value="P:cell division"/>
    <property type="evidence" value="ECO:0007669"/>
    <property type="project" value="UniProtKB-KW"/>
</dbReference>
<dbReference type="GO" id="GO:0007059">
    <property type="term" value="P:chromosome segregation"/>
    <property type="evidence" value="ECO:0007669"/>
    <property type="project" value="UniProtKB-UniRule"/>
</dbReference>
<dbReference type="GO" id="GO:0006313">
    <property type="term" value="P:DNA transposition"/>
    <property type="evidence" value="ECO:0007669"/>
    <property type="project" value="UniProtKB-UniRule"/>
</dbReference>
<dbReference type="CDD" id="cd00798">
    <property type="entry name" value="INT_XerDC_C"/>
    <property type="match status" value="1"/>
</dbReference>
<dbReference type="Gene3D" id="1.10.150.130">
    <property type="match status" value="1"/>
</dbReference>
<dbReference type="Gene3D" id="1.10.443.10">
    <property type="entry name" value="Intergrase catalytic core"/>
    <property type="match status" value="1"/>
</dbReference>
<dbReference type="HAMAP" id="MF_01808">
    <property type="entry name" value="Recomb_XerC_XerD"/>
    <property type="match status" value="1"/>
</dbReference>
<dbReference type="InterPro" id="IPR044068">
    <property type="entry name" value="CB"/>
</dbReference>
<dbReference type="InterPro" id="IPR011010">
    <property type="entry name" value="DNA_brk_join_enz"/>
</dbReference>
<dbReference type="InterPro" id="IPR013762">
    <property type="entry name" value="Integrase-like_cat_sf"/>
</dbReference>
<dbReference type="InterPro" id="IPR002104">
    <property type="entry name" value="Integrase_catalytic"/>
</dbReference>
<dbReference type="InterPro" id="IPR010998">
    <property type="entry name" value="Integrase_recombinase_N"/>
</dbReference>
<dbReference type="InterPro" id="IPR004107">
    <property type="entry name" value="Integrase_SAM-like_N"/>
</dbReference>
<dbReference type="InterPro" id="IPR023009">
    <property type="entry name" value="Tyrosine_recombinase_XerC/XerD"/>
</dbReference>
<dbReference type="InterPro" id="IPR050090">
    <property type="entry name" value="Tyrosine_recombinase_XerCD"/>
</dbReference>
<dbReference type="NCBIfam" id="NF001399">
    <property type="entry name" value="PRK00283.1"/>
    <property type="match status" value="1"/>
</dbReference>
<dbReference type="PANTHER" id="PTHR30349">
    <property type="entry name" value="PHAGE INTEGRASE-RELATED"/>
    <property type="match status" value="1"/>
</dbReference>
<dbReference type="PANTHER" id="PTHR30349:SF77">
    <property type="entry name" value="TYROSINE RECOMBINASE XERC"/>
    <property type="match status" value="1"/>
</dbReference>
<dbReference type="Pfam" id="PF02899">
    <property type="entry name" value="Phage_int_SAM_1"/>
    <property type="match status" value="1"/>
</dbReference>
<dbReference type="Pfam" id="PF00589">
    <property type="entry name" value="Phage_integrase"/>
    <property type="match status" value="1"/>
</dbReference>
<dbReference type="SUPFAM" id="SSF56349">
    <property type="entry name" value="DNA breaking-rejoining enzymes"/>
    <property type="match status" value="1"/>
</dbReference>
<dbReference type="SUPFAM" id="SSF47823">
    <property type="entry name" value="lambda integrase-like, N-terminal domain"/>
    <property type="match status" value="1"/>
</dbReference>
<dbReference type="PROSITE" id="PS51900">
    <property type="entry name" value="CB"/>
    <property type="match status" value="1"/>
</dbReference>
<dbReference type="PROSITE" id="PS51898">
    <property type="entry name" value="TYR_RECOMBINASE"/>
    <property type="match status" value="1"/>
</dbReference>
<protein>
    <recommendedName>
        <fullName evidence="1">Tyrosine recombinase XerC</fullName>
    </recommendedName>
</protein>
<comment type="function">
    <text evidence="1">Site-specific tyrosine recombinase, which acts by catalyzing the cutting and rejoining of the recombining DNA molecules. The XerC-XerD complex is essential to convert dimers of the bacterial chromosome into monomers to permit their segregation at cell division. It also contributes to the segregational stability of plasmids.</text>
</comment>
<comment type="subunit">
    <text evidence="1">Forms a cyclic heterotetrameric complex composed of two molecules of XerC and two molecules of XerD.</text>
</comment>
<comment type="subcellular location">
    <subcellularLocation>
        <location evidence="1">Cytoplasm</location>
    </subcellularLocation>
</comment>
<comment type="similarity">
    <text evidence="1">Belongs to the 'phage' integrase family. XerC subfamily.</text>
</comment>
<name>XERC_MYXXA</name>
<feature type="chain" id="PRO_0000095308" description="Tyrosine recombinase XerC">
    <location>
        <begin position="1"/>
        <end position="300"/>
    </location>
</feature>
<feature type="domain" description="Core-binding (CB)" evidence="3">
    <location>
        <begin position="2"/>
        <end position="87"/>
    </location>
</feature>
<feature type="domain" description="Tyr recombinase" evidence="2">
    <location>
        <begin position="108"/>
        <end position="294"/>
    </location>
</feature>
<feature type="active site" evidence="1">
    <location>
        <position position="148"/>
    </location>
</feature>
<feature type="active site" evidence="1">
    <location>
        <position position="172"/>
    </location>
</feature>
<feature type="active site" evidence="1">
    <location>
        <position position="246"/>
    </location>
</feature>
<feature type="active site" evidence="1">
    <location>
        <position position="249"/>
    </location>
</feature>
<feature type="active site" evidence="1">
    <location>
        <position position="272"/>
    </location>
</feature>
<feature type="active site" description="O-(3'-phospho-DNA)-tyrosine intermediate" evidence="1">
    <location>
        <position position="281"/>
    </location>
</feature>
<reference key="1">
    <citation type="journal article" date="2003" name="Mol. Microbiol.">
        <title>Identification of genes required for adventurous gliding motility in Myxococcus xanthus with the transposable element mariner.</title>
        <authorList>
            <person name="Youderian P.A."/>
            <person name="Burke N."/>
            <person name="White D.J."/>
            <person name="Hartzell P.L."/>
        </authorList>
    </citation>
    <scope>NUCLEOTIDE SEQUENCE [GENOMIC DNA]</scope>
</reference>
<proteinExistence type="inferred from homology"/>